<gene>
    <name evidence="1" type="primary">atpB</name>
    <name type="ordered locus">CKO_00078</name>
</gene>
<sequence>MASENMTPQDYIGHHLNNLQLDLRTFSLVDPHNPPATFWTLNIDSMFFSVVLGLLFLLMFRSVAKKATSGVPGKFQTAIELVIGFVHGSVKDMYHGKSKLIAPLALTIFVWVFLMNLMDLLPIDLLPYIGEHIFGLPALRVVPSADVNITLSMALGVFILILFYSIKMKGIGGFTKELTLQPFNHWAFIPVNLILEGVSLLSKPVSLGLRLFGNMYAGELIFILIAGLLPWWSQWILNVPWAIFHILIITLQAFIFMGLTIVYLSMASEEH</sequence>
<keyword id="KW-0066">ATP synthesis</keyword>
<keyword id="KW-0997">Cell inner membrane</keyword>
<keyword id="KW-1003">Cell membrane</keyword>
<keyword id="KW-0138">CF(0)</keyword>
<keyword id="KW-0375">Hydrogen ion transport</keyword>
<keyword id="KW-0406">Ion transport</keyword>
<keyword id="KW-0472">Membrane</keyword>
<keyword id="KW-1185">Reference proteome</keyword>
<keyword id="KW-0812">Transmembrane</keyword>
<keyword id="KW-1133">Transmembrane helix</keyword>
<keyword id="KW-0813">Transport</keyword>
<comment type="function">
    <text evidence="1">Key component of the proton channel; it plays a direct role in the translocation of protons across the membrane.</text>
</comment>
<comment type="subunit">
    <text evidence="1">F-type ATPases have 2 components, CF(1) - the catalytic core - and CF(0) - the membrane proton channel. CF(1) has five subunits: alpha(3), beta(3), gamma(1), delta(1), epsilon(1). CF(0) has three main subunits: a(1), b(2) and c(9-12). The alpha and beta chains form an alternating ring which encloses part of the gamma chain. CF(1) is attached to CF(0) by a central stalk formed by the gamma and epsilon chains, while a peripheral stalk is formed by the delta and b chains.</text>
</comment>
<comment type="subcellular location">
    <subcellularLocation>
        <location evidence="1">Cell inner membrane</location>
        <topology evidence="1">Multi-pass membrane protein</topology>
    </subcellularLocation>
</comment>
<comment type="similarity">
    <text evidence="1">Belongs to the ATPase A chain family.</text>
</comment>
<protein>
    <recommendedName>
        <fullName evidence="1">ATP synthase subunit a</fullName>
    </recommendedName>
    <alternativeName>
        <fullName evidence="1">ATP synthase F0 sector subunit a</fullName>
    </alternativeName>
    <alternativeName>
        <fullName evidence="1">F-ATPase subunit 6</fullName>
    </alternativeName>
</protein>
<evidence type="ECO:0000255" key="1">
    <source>
        <dbReference type="HAMAP-Rule" id="MF_01393"/>
    </source>
</evidence>
<dbReference type="EMBL" id="CP000822">
    <property type="protein sequence ID" value="ABV11257.1"/>
    <property type="molecule type" value="Genomic_DNA"/>
</dbReference>
<dbReference type="RefSeq" id="WP_012131095.1">
    <property type="nucleotide sequence ID" value="NC_009792.1"/>
</dbReference>
<dbReference type="SMR" id="A8ACP4"/>
<dbReference type="STRING" id="290338.CKO_00078"/>
<dbReference type="GeneID" id="45134379"/>
<dbReference type="KEGG" id="cko:CKO_00078"/>
<dbReference type="HOGENOM" id="CLU_041018_1_0_6"/>
<dbReference type="OrthoDB" id="9789241at2"/>
<dbReference type="Proteomes" id="UP000008148">
    <property type="component" value="Chromosome"/>
</dbReference>
<dbReference type="GO" id="GO:0005886">
    <property type="term" value="C:plasma membrane"/>
    <property type="evidence" value="ECO:0007669"/>
    <property type="project" value="UniProtKB-SubCell"/>
</dbReference>
<dbReference type="GO" id="GO:0045259">
    <property type="term" value="C:proton-transporting ATP synthase complex"/>
    <property type="evidence" value="ECO:0007669"/>
    <property type="project" value="UniProtKB-KW"/>
</dbReference>
<dbReference type="GO" id="GO:0046933">
    <property type="term" value="F:proton-transporting ATP synthase activity, rotational mechanism"/>
    <property type="evidence" value="ECO:0007669"/>
    <property type="project" value="UniProtKB-UniRule"/>
</dbReference>
<dbReference type="GO" id="GO:0042777">
    <property type="term" value="P:proton motive force-driven plasma membrane ATP synthesis"/>
    <property type="evidence" value="ECO:0007669"/>
    <property type="project" value="TreeGrafter"/>
</dbReference>
<dbReference type="CDD" id="cd00310">
    <property type="entry name" value="ATP-synt_Fo_a_6"/>
    <property type="match status" value="1"/>
</dbReference>
<dbReference type="FunFam" id="1.20.120.220:FF:000002">
    <property type="entry name" value="ATP synthase subunit a"/>
    <property type="match status" value="1"/>
</dbReference>
<dbReference type="Gene3D" id="1.20.120.220">
    <property type="entry name" value="ATP synthase, F0 complex, subunit A"/>
    <property type="match status" value="1"/>
</dbReference>
<dbReference type="HAMAP" id="MF_01393">
    <property type="entry name" value="ATP_synth_a_bact"/>
    <property type="match status" value="1"/>
</dbReference>
<dbReference type="InterPro" id="IPR045082">
    <property type="entry name" value="ATP_syn_F0_a_bact/chloroplast"/>
</dbReference>
<dbReference type="InterPro" id="IPR000568">
    <property type="entry name" value="ATP_synth_F0_asu"/>
</dbReference>
<dbReference type="InterPro" id="IPR023011">
    <property type="entry name" value="ATP_synth_F0_asu_AS"/>
</dbReference>
<dbReference type="InterPro" id="IPR035908">
    <property type="entry name" value="F0_ATP_A_sf"/>
</dbReference>
<dbReference type="NCBIfam" id="TIGR01131">
    <property type="entry name" value="ATP_synt_6_or_A"/>
    <property type="match status" value="1"/>
</dbReference>
<dbReference type="NCBIfam" id="NF004477">
    <property type="entry name" value="PRK05815.1-1"/>
    <property type="match status" value="1"/>
</dbReference>
<dbReference type="PANTHER" id="PTHR42823">
    <property type="entry name" value="ATP SYNTHASE SUBUNIT A, CHLOROPLASTIC"/>
    <property type="match status" value="1"/>
</dbReference>
<dbReference type="PANTHER" id="PTHR42823:SF3">
    <property type="entry name" value="ATP SYNTHASE SUBUNIT A, CHLOROPLASTIC"/>
    <property type="match status" value="1"/>
</dbReference>
<dbReference type="Pfam" id="PF00119">
    <property type="entry name" value="ATP-synt_A"/>
    <property type="match status" value="1"/>
</dbReference>
<dbReference type="PRINTS" id="PR00123">
    <property type="entry name" value="ATPASEA"/>
</dbReference>
<dbReference type="SUPFAM" id="SSF81336">
    <property type="entry name" value="F1F0 ATP synthase subunit A"/>
    <property type="match status" value="1"/>
</dbReference>
<dbReference type="PROSITE" id="PS00449">
    <property type="entry name" value="ATPASE_A"/>
    <property type="match status" value="1"/>
</dbReference>
<organism>
    <name type="scientific">Citrobacter koseri (strain ATCC BAA-895 / CDC 4225-83 / SGSC4696)</name>
    <dbReference type="NCBI Taxonomy" id="290338"/>
    <lineage>
        <taxon>Bacteria</taxon>
        <taxon>Pseudomonadati</taxon>
        <taxon>Pseudomonadota</taxon>
        <taxon>Gammaproteobacteria</taxon>
        <taxon>Enterobacterales</taxon>
        <taxon>Enterobacteriaceae</taxon>
        <taxon>Citrobacter</taxon>
    </lineage>
</organism>
<name>ATP6_CITK8</name>
<accession>A8ACP4</accession>
<proteinExistence type="inferred from homology"/>
<reference key="1">
    <citation type="submission" date="2007-08" db="EMBL/GenBank/DDBJ databases">
        <authorList>
            <consortium name="The Citrobacter koseri Genome Sequencing Project"/>
            <person name="McClelland M."/>
            <person name="Sanderson E.K."/>
            <person name="Porwollik S."/>
            <person name="Spieth J."/>
            <person name="Clifton W.S."/>
            <person name="Latreille P."/>
            <person name="Courtney L."/>
            <person name="Wang C."/>
            <person name="Pepin K."/>
            <person name="Bhonagiri V."/>
            <person name="Nash W."/>
            <person name="Johnson M."/>
            <person name="Thiruvilangam P."/>
            <person name="Wilson R."/>
        </authorList>
    </citation>
    <scope>NUCLEOTIDE SEQUENCE [LARGE SCALE GENOMIC DNA]</scope>
    <source>
        <strain>ATCC BAA-895 / CDC 4225-83 / SGSC4696</strain>
    </source>
</reference>
<feature type="chain" id="PRO_0000362275" description="ATP synthase subunit a">
    <location>
        <begin position="1"/>
        <end position="271"/>
    </location>
</feature>
<feature type="transmembrane region" description="Helical" evidence="1">
    <location>
        <begin position="38"/>
        <end position="58"/>
    </location>
</feature>
<feature type="transmembrane region" description="Helical" evidence="1">
    <location>
        <begin position="100"/>
        <end position="120"/>
    </location>
</feature>
<feature type="transmembrane region" description="Helical" evidence="1">
    <location>
        <begin position="146"/>
        <end position="166"/>
    </location>
</feature>
<feature type="transmembrane region" description="Helical" evidence="1">
    <location>
        <begin position="220"/>
        <end position="240"/>
    </location>
</feature>
<feature type="transmembrane region" description="Helical" evidence="1">
    <location>
        <begin position="242"/>
        <end position="262"/>
    </location>
</feature>